<gene>
    <name type="primary">pksD</name>
    <name type="ordered locus">BSU17110</name>
</gene>
<feature type="chain" id="PRO_0000388000" description="Polyketide biosynthesis acyltransferase homolog PksD">
    <location>
        <begin position="1"/>
        <end position="324"/>
    </location>
</feature>
<feature type="active site" evidence="1">
    <location>
        <position position="99"/>
    </location>
</feature>
<feature type="strand" evidence="4">
    <location>
        <begin position="5"/>
        <end position="9"/>
    </location>
</feature>
<feature type="turn" evidence="4">
    <location>
        <begin position="17"/>
        <end position="20"/>
    </location>
</feature>
<feature type="helix" evidence="4">
    <location>
        <begin position="21"/>
        <end position="26"/>
    </location>
</feature>
<feature type="helix" evidence="4">
    <location>
        <begin position="28"/>
        <end position="45"/>
    </location>
</feature>
<feature type="helix" evidence="4">
    <location>
        <begin position="49"/>
        <end position="53"/>
    </location>
</feature>
<feature type="helix" evidence="4">
    <location>
        <begin position="67"/>
        <end position="87"/>
    </location>
</feature>
<feature type="strand" evidence="4">
    <location>
        <begin position="93"/>
        <end position="97"/>
    </location>
</feature>
<feature type="helix" evidence="4">
    <location>
        <begin position="101"/>
        <end position="109"/>
    </location>
</feature>
<feature type="helix" evidence="4">
    <location>
        <begin position="114"/>
        <end position="131"/>
    </location>
</feature>
<feature type="strand" evidence="4">
    <location>
        <begin position="136"/>
        <end position="140"/>
    </location>
</feature>
<feature type="helix" evidence="4">
    <location>
        <begin position="145"/>
        <end position="149"/>
    </location>
</feature>
<feature type="helix" evidence="4">
    <location>
        <begin position="151"/>
        <end position="154"/>
    </location>
</feature>
<feature type="strand" evidence="4">
    <location>
        <begin position="158"/>
        <end position="164"/>
    </location>
</feature>
<feature type="strand" evidence="4">
    <location>
        <begin position="167"/>
        <end position="172"/>
    </location>
</feature>
<feature type="helix" evidence="4">
    <location>
        <begin position="174"/>
        <end position="185"/>
    </location>
</feature>
<feature type="turn" evidence="4">
    <location>
        <begin position="186"/>
        <end position="188"/>
    </location>
</feature>
<feature type="strand" evidence="4">
    <location>
        <begin position="191"/>
        <end position="193"/>
    </location>
</feature>
<feature type="helix" evidence="4">
    <location>
        <begin position="203"/>
        <end position="208"/>
    </location>
</feature>
<feature type="helix" evidence="4">
    <location>
        <begin position="209"/>
        <end position="217"/>
    </location>
</feature>
<feature type="strand" evidence="4">
    <location>
        <begin position="228"/>
        <end position="230"/>
    </location>
</feature>
<feature type="turn" evidence="4">
    <location>
        <begin position="231"/>
        <end position="234"/>
    </location>
</feature>
<feature type="strand" evidence="4">
    <location>
        <begin position="235"/>
        <end position="238"/>
    </location>
</feature>
<feature type="helix" evidence="4">
    <location>
        <begin position="244"/>
        <end position="250"/>
    </location>
</feature>
<feature type="helix" evidence="4">
    <location>
        <begin position="255"/>
        <end position="265"/>
    </location>
</feature>
<feature type="strand" evidence="4">
    <location>
        <begin position="269"/>
        <end position="272"/>
    </location>
</feature>
<feature type="helix" evidence="4">
    <location>
        <begin position="275"/>
        <end position="277"/>
    </location>
</feature>
<feature type="helix" evidence="4">
    <location>
        <begin position="278"/>
        <end position="286"/>
    </location>
</feature>
<feature type="helix" evidence="4">
    <location>
        <begin position="289"/>
        <end position="294"/>
    </location>
</feature>
<feature type="strand" evidence="4">
    <location>
        <begin position="295"/>
        <end position="298"/>
    </location>
</feature>
<feature type="helix" evidence="4">
    <location>
        <begin position="305"/>
        <end position="313"/>
    </location>
</feature>
<evidence type="ECO:0000250" key="1"/>
<evidence type="ECO:0000269" key="2">
    <source>
    </source>
</evidence>
<evidence type="ECO:0000269" key="3">
    <source>
    </source>
</evidence>
<evidence type="ECO:0007829" key="4">
    <source>
        <dbReference type="PDB" id="8AVZ"/>
    </source>
</evidence>
<protein>
    <recommendedName>
        <fullName>Polyketide biosynthesis acyltransferase homolog PksD</fullName>
        <shortName>AT</shortName>
        <ecNumber>2.3.1.-</ecNumber>
    </recommendedName>
    <alternativeName>
        <fullName>Transacylase</fullName>
    </alternativeName>
</protein>
<keyword id="KW-0002">3D-structure</keyword>
<keyword id="KW-0012">Acyltransferase</keyword>
<keyword id="KW-0045">Antibiotic biosynthesis</keyword>
<keyword id="KW-0963">Cytoplasm</keyword>
<keyword id="KW-1185">Reference proteome</keyword>
<keyword id="KW-0808">Transferase</keyword>
<dbReference type="EC" id="2.3.1.-"/>
<dbReference type="EMBL" id="AL009126">
    <property type="protein sequence ID" value="CAB13583.2"/>
    <property type="molecule type" value="Genomic_DNA"/>
</dbReference>
<dbReference type="RefSeq" id="NP_389592.2">
    <property type="nucleotide sequence ID" value="NC_000964.3"/>
</dbReference>
<dbReference type="RefSeq" id="WP_003231814.1">
    <property type="nucleotide sequence ID" value="NZ_OZ025638.1"/>
</dbReference>
<dbReference type="PDB" id="8AVZ">
    <property type="method" value="X-ray"/>
    <property type="resolution" value="1.96 A"/>
    <property type="chains" value="A/B/C/D=1-324"/>
</dbReference>
<dbReference type="PDB" id="8AW0">
    <property type="method" value="X-ray"/>
    <property type="resolution" value="2.20 A"/>
    <property type="chains" value="A/B/C/D/E/F/G/H=1-324"/>
</dbReference>
<dbReference type="PDBsum" id="8AVZ"/>
<dbReference type="PDBsum" id="8AW0"/>
<dbReference type="SMR" id="O34877"/>
<dbReference type="FunCoup" id="O34877">
    <property type="interactions" value="20"/>
</dbReference>
<dbReference type="STRING" id="224308.BSU17110"/>
<dbReference type="PaxDb" id="224308-BSU17110"/>
<dbReference type="EnsemblBacteria" id="CAB13583">
    <property type="protein sequence ID" value="CAB13583"/>
    <property type="gene ID" value="BSU_17110"/>
</dbReference>
<dbReference type="GeneID" id="939463"/>
<dbReference type="KEGG" id="bsu:BSU17110"/>
<dbReference type="PATRIC" id="fig|224308.179.peg.1856"/>
<dbReference type="eggNOG" id="COG3321">
    <property type="taxonomic scope" value="Bacteria"/>
</dbReference>
<dbReference type="InParanoid" id="O34877"/>
<dbReference type="OrthoDB" id="9765680at2"/>
<dbReference type="PhylomeDB" id="O34877"/>
<dbReference type="BioCyc" id="BSUB:BSU17110-MONOMER"/>
<dbReference type="UniPathway" id="UPA01003"/>
<dbReference type="Proteomes" id="UP000001570">
    <property type="component" value="Chromosome"/>
</dbReference>
<dbReference type="GO" id="GO:0005737">
    <property type="term" value="C:cytoplasm"/>
    <property type="evidence" value="ECO:0007669"/>
    <property type="project" value="UniProtKB-SubCell"/>
</dbReference>
<dbReference type="GO" id="GO:0016746">
    <property type="term" value="F:acyltransferase activity"/>
    <property type="evidence" value="ECO:0007669"/>
    <property type="project" value="UniProtKB-KW"/>
</dbReference>
<dbReference type="GO" id="GO:0017000">
    <property type="term" value="P:antibiotic biosynthetic process"/>
    <property type="evidence" value="ECO:0007669"/>
    <property type="project" value="UniProtKB-KW"/>
</dbReference>
<dbReference type="Gene3D" id="3.40.366.10">
    <property type="entry name" value="Malonyl-Coenzyme A Acyl Carrier Protein, domain 2"/>
    <property type="match status" value="1"/>
</dbReference>
<dbReference type="InterPro" id="IPR001227">
    <property type="entry name" value="Ac_transferase_dom_sf"/>
</dbReference>
<dbReference type="InterPro" id="IPR014043">
    <property type="entry name" value="Acyl_transferase_dom"/>
</dbReference>
<dbReference type="InterPro" id="IPR016035">
    <property type="entry name" value="Acyl_Trfase/lysoPLipase"/>
</dbReference>
<dbReference type="InterPro" id="IPR016036">
    <property type="entry name" value="Malonyl_transacylase_ACP-bd"/>
</dbReference>
<dbReference type="InterPro" id="IPR050444">
    <property type="entry name" value="Polyketide_Synthase"/>
</dbReference>
<dbReference type="PANTHER" id="PTHR45681:SF6">
    <property type="entry name" value="POLYKETIDE SYNTHASE 37"/>
    <property type="match status" value="1"/>
</dbReference>
<dbReference type="PANTHER" id="PTHR45681">
    <property type="entry name" value="POLYKETIDE SYNTHASE 44-RELATED"/>
    <property type="match status" value="1"/>
</dbReference>
<dbReference type="Pfam" id="PF00698">
    <property type="entry name" value="Acyl_transf_1"/>
    <property type="match status" value="1"/>
</dbReference>
<dbReference type="SMART" id="SM00827">
    <property type="entry name" value="PKS_AT"/>
    <property type="match status" value="1"/>
</dbReference>
<dbReference type="SUPFAM" id="SSF52151">
    <property type="entry name" value="FabD/lysophospholipase-like"/>
    <property type="match status" value="1"/>
</dbReference>
<dbReference type="SUPFAM" id="SSF55048">
    <property type="entry name" value="Probable ACP-binding domain of malonyl-CoA ACP transacylase"/>
    <property type="match status" value="1"/>
</dbReference>
<accession>O34877</accession>
<reference key="1">
    <citation type="journal article" date="1997" name="Nature">
        <title>The complete genome sequence of the Gram-positive bacterium Bacillus subtilis.</title>
        <authorList>
            <person name="Kunst F."/>
            <person name="Ogasawara N."/>
            <person name="Moszer I."/>
            <person name="Albertini A.M."/>
            <person name="Alloni G."/>
            <person name="Azevedo V."/>
            <person name="Bertero M.G."/>
            <person name="Bessieres P."/>
            <person name="Bolotin A."/>
            <person name="Borchert S."/>
            <person name="Borriss R."/>
            <person name="Boursier L."/>
            <person name="Brans A."/>
            <person name="Braun M."/>
            <person name="Brignell S.C."/>
            <person name="Bron S."/>
            <person name="Brouillet S."/>
            <person name="Bruschi C.V."/>
            <person name="Caldwell B."/>
            <person name="Capuano V."/>
            <person name="Carter N.M."/>
            <person name="Choi S.-K."/>
            <person name="Codani J.-J."/>
            <person name="Connerton I.F."/>
            <person name="Cummings N.J."/>
            <person name="Daniel R.A."/>
            <person name="Denizot F."/>
            <person name="Devine K.M."/>
            <person name="Duesterhoeft A."/>
            <person name="Ehrlich S.D."/>
            <person name="Emmerson P.T."/>
            <person name="Entian K.-D."/>
            <person name="Errington J."/>
            <person name="Fabret C."/>
            <person name="Ferrari E."/>
            <person name="Foulger D."/>
            <person name="Fritz C."/>
            <person name="Fujita M."/>
            <person name="Fujita Y."/>
            <person name="Fuma S."/>
            <person name="Galizzi A."/>
            <person name="Galleron N."/>
            <person name="Ghim S.-Y."/>
            <person name="Glaser P."/>
            <person name="Goffeau A."/>
            <person name="Golightly E.J."/>
            <person name="Grandi G."/>
            <person name="Guiseppi G."/>
            <person name="Guy B.J."/>
            <person name="Haga K."/>
            <person name="Haiech J."/>
            <person name="Harwood C.R."/>
            <person name="Henaut A."/>
            <person name="Hilbert H."/>
            <person name="Holsappel S."/>
            <person name="Hosono S."/>
            <person name="Hullo M.-F."/>
            <person name="Itaya M."/>
            <person name="Jones L.-M."/>
            <person name="Joris B."/>
            <person name="Karamata D."/>
            <person name="Kasahara Y."/>
            <person name="Klaerr-Blanchard M."/>
            <person name="Klein C."/>
            <person name="Kobayashi Y."/>
            <person name="Koetter P."/>
            <person name="Koningstein G."/>
            <person name="Krogh S."/>
            <person name="Kumano M."/>
            <person name="Kurita K."/>
            <person name="Lapidus A."/>
            <person name="Lardinois S."/>
            <person name="Lauber J."/>
            <person name="Lazarevic V."/>
            <person name="Lee S.-M."/>
            <person name="Levine A."/>
            <person name="Liu H."/>
            <person name="Masuda S."/>
            <person name="Mauel C."/>
            <person name="Medigue C."/>
            <person name="Medina N."/>
            <person name="Mellado R.P."/>
            <person name="Mizuno M."/>
            <person name="Moestl D."/>
            <person name="Nakai S."/>
            <person name="Noback M."/>
            <person name="Noone D."/>
            <person name="O'Reilly M."/>
            <person name="Ogawa K."/>
            <person name="Ogiwara A."/>
            <person name="Oudega B."/>
            <person name="Park S.-H."/>
            <person name="Parro V."/>
            <person name="Pohl T.M."/>
            <person name="Portetelle D."/>
            <person name="Porwollik S."/>
            <person name="Prescott A.M."/>
            <person name="Presecan E."/>
            <person name="Pujic P."/>
            <person name="Purnelle B."/>
            <person name="Rapoport G."/>
            <person name="Rey M."/>
            <person name="Reynolds S."/>
            <person name="Rieger M."/>
            <person name="Rivolta C."/>
            <person name="Rocha E."/>
            <person name="Roche B."/>
            <person name="Rose M."/>
            <person name="Sadaie Y."/>
            <person name="Sato T."/>
            <person name="Scanlan E."/>
            <person name="Schleich S."/>
            <person name="Schroeter R."/>
            <person name="Scoffone F."/>
            <person name="Sekiguchi J."/>
            <person name="Sekowska A."/>
            <person name="Seror S.J."/>
            <person name="Serror P."/>
            <person name="Shin B.-S."/>
            <person name="Soldo B."/>
            <person name="Sorokin A."/>
            <person name="Tacconi E."/>
            <person name="Takagi T."/>
            <person name="Takahashi H."/>
            <person name="Takemaru K."/>
            <person name="Takeuchi M."/>
            <person name="Tamakoshi A."/>
            <person name="Tanaka T."/>
            <person name="Terpstra P."/>
            <person name="Tognoni A."/>
            <person name="Tosato V."/>
            <person name="Uchiyama S."/>
            <person name="Vandenbol M."/>
            <person name="Vannier F."/>
            <person name="Vassarotti A."/>
            <person name="Viari A."/>
            <person name="Wambutt R."/>
            <person name="Wedler E."/>
            <person name="Wedler H."/>
            <person name="Weitzenegger T."/>
            <person name="Winters P."/>
            <person name="Wipat A."/>
            <person name="Yamamoto H."/>
            <person name="Yamane K."/>
            <person name="Yasumoto K."/>
            <person name="Yata K."/>
            <person name="Yoshida K."/>
            <person name="Yoshikawa H.-F."/>
            <person name="Zumstein E."/>
            <person name="Yoshikawa H."/>
            <person name="Danchin A."/>
        </authorList>
    </citation>
    <scope>NUCLEOTIDE SEQUENCE [LARGE SCALE GENOMIC DNA]</scope>
    <source>
        <strain>168</strain>
    </source>
</reference>
<reference key="2">
    <citation type="journal article" date="2009" name="Microbiology">
        <title>From a consortium sequence to a unified sequence: the Bacillus subtilis 168 reference genome a decade later.</title>
        <authorList>
            <person name="Barbe V."/>
            <person name="Cruveiller S."/>
            <person name="Kunst F."/>
            <person name="Lenoble P."/>
            <person name="Meurice G."/>
            <person name="Sekowska A."/>
            <person name="Vallenet D."/>
            <person name="Wang T."/>
            <person name="Moszer I."/>
            <person name="Medigue C."/>
            <person name="Danchin A."/>
        </authorList>
    </citation>
    <scope>SEQUENCE REVISION TO 99-129</scope>
</reference>
<reference key="3">
    <citation type="journal article" date="2007" name="Proc. Natl. Acad. Sci. U.S.A.">
        <title>A singular enzymatic megacomplex from Bacillus subtilis.</title>
        <authorList>
            <person name="Straight P.D."/>
            <person name="Fischbach M.A."/>
            <person name="Walsh C.T."/>
            <person name="Rudner D.Z."/>
            <person name="Kolter R."/>
        </authorList>
    </citation>
    <scope>SUBCELLULAR LOCATION</scope>
    <source>
        <strain>168 / Marburg / ATCC 6051 / DSM 10 / JCM 1465 / NBRC 13719 / NCIMB 3610 / NRRL NRS-744 / VKM B-501</strain>
    </source>
</reference>
<reference key="4">
    <citation type="journal article" date="2007" name="Proc. Natl. Acad. Sci. U.S.A.">
        <title>The identification of bacillaene, the product of the PksX megacomplex in Bacillus subtilis.</title>
        <authorList>
            <person name="Butcher R.A."/>
            <person name="Schroeder F.C."/>
            <person name="Fischbach M.A."/>
            <person name="Straight P.D."/>
            <person name="Kolter R."/>
            <person name="Walsh C.T."/>
            <person name="Clardy J."/>
        </authorList>
    </citation>
    <scope>FUNCTION IN BACILLAENE BIOSYNTHESIS</scope>
    <source>
        <strain>168 / Marburg / ATCC 6051 / DSM 10 / JCM 1465 / NBRC 13719 / NCIMB 3610 / NRRL NRS-744 / VKM B-501</strain>
    </source>
</reference>
<sequence length="324" mass="36813">MNEPLVFMFSGQGSQYYHMGKELFKENTVFRQSMLEMDAIAARRIGTSIVEEIYHPGKRVSDPFDSILFSHPAIFMIEYSLYKVLEDRGIYPDYVLGSSLGEFAAAAVSGVSDAEDMLDCILEQAIIIQNSCDKGKMLAILDKPQLLNDHPQLFGNSELISINYDSHFVISGEEDHIRKIMEDLKEKQILCQLLPVSYAFHSSLIDPAESAYAEFLRSKSFQKPSIPIVSSLTGSCLHVMDENFFWNAVRKPMMFREAIRYLESQHTCKFIDLGPSGTLAAFVKQLIPGDSADRCCSIITPFHQELKNLNTVEYFRTPERKFTR</sequence>
<proteinExistence type="evidence at protein level"/>
<comment type="function">
    <text evidence="3">Probably involved in some intermediate steps for the synthesis of the antibiotic polyketide bacillaene which is involved in secondary metabolism.</text>
</comment>
<comment type="pathway">
    <text>Antibiotic biosynthesis; bacillaene biosynthesis.</text>
</comment>
<comment type="subcellular location">
    <subcellularLocation>
        <location evidence="2">Cytoplasm</location>
    </subcellularLocation>
</comment>
<organism>
    <name type="scientific">Bacillus subtilis (strain 168)</name>
    <dbReference type="NCBI Taxonomy" id="224308"/>
    <lineage>
        <taxon>Bacteria</taxon>
        <taxon>Bacillati</taxon>
        <taxon>Bacillota</taxon>
        <taxon>Bacilli</taxon>
        <taxon>Bacillales</taxon>
        <taxon>Bacillaceae</taxon>
        <taxon>Bacillus</taxon>
    </lineage>
</organism>
<name>PKSD_BACSU</name>